<proteinExistence type="inferred from homology"/>
<evidence type="ECO:0000250" key="1"/>
<evidence type="ECO:0000250" key="2">
    <source>
        <dbReference type="UniProtKB" id="P9WIE3"/>
    </source>
</evidence>
<evidence type="ECO:0000255" key="3">
    <source>
        <dbReference type="PROSITE-ProRule" id="PRU00691"/>
    </source>
</evidence>
<evidence type="ECO:0000305" key="4"/>
<reference key="1">
    <citation type="journal article" date="2002" name="J. Bacteriol.">
        <title>Whole-genome comparison of Mycobacterium tuberculosis clinical and laboratory strains.</title>
        <authorList>
            <person name="Fleischmann R.D."/>
            <person name="Alland D."/>
            <person name="Eisen J.A."/>
            <person name="Carpenter L."/>
            <person name="White O."/>
            <person name="Peterson J.D."/>
            <person name="DeBoy R.T."/>
            <person name="Dodson R.J."/>
            <person name="Gwinn M.L."/>
            <person name="Haft D.H."/>
            <person name="Hickey E.K."/>
            <person name="Kolonay J.F."/>
            <person name="Nelson W.C."/>
            <person name="Umayam L.A."/>
            <person name="Ermolaeva M.D."/>
            <person name="Salzberg S.L."/>
            <person name="Delcher A."/>
            <person name="Utterback T.R."/>
            <person name="Weidman J.F."/>
            <person name="Khouri H.M."/>
            <person name="Gill J."/>
            <person name="Mikula A."/>
            <person name="Bishai W."/>
            <person name="Jacobs W.R. Jr."/>
            <person name="Venter J.C."/>
            <person name="Fraser C.M."/>
        </authorList>
    </citation>
    <scope>NUCLEOTIDE SEQUENCE [LARGE SCALE GENOMIC DNA]</scope>
    <source>
        <strain>CDC 1551 / Oshkosh</strain>
    </source>
</reference>
<keyword id="KW-0049">Antioxidant</keyword>
<keyword id="KW-0560">Oxidoreductase</keyword>
<keyword id="KW-0575">Peroxidase</keyword>
<keyword id="KW-0676">Redox-active center</keyword>
<keyword id="KW-1185">Reference proteome</keyword>
<accession>P9WIE2</accession>
<accession>L0TAL3</accession>
<accession>P65688</accession>
<accession>Q10520</accession>
<comment type="function">
    <text evidence="2">Thiol-specific peroxidase that catalyzes the reduction of hydrogen peroxide and organic hydroperoxides to water and alcohols, respectively. Plays a role in cell protection against oxidative stress by detoxifying peroxides. May represent an important antioxidant defense against cytotoxic peroxides, especially peroxynitrite, which can be formed by activated macrophages during infection.</text>
</comment>
<comment type="catalytic activity">
    <reaction evidence="2">
        <text>[mycoredoxin]-L-dithiol + a hydroperoxide = [mycoredoxin]-L-disulfide + an alcohol + H2O</text>
        <dbReference type="Rhea" id="RHEA:62640"/>
        <dbReference type="Rhea" id="RHEA-COMP:16137"/>
        <dbReference type="Rhea" id="RHEA-COMP:16138"/>
        <dbReference type="ChEBI" id="CHEBI:15377"/>
        <dbReference type="ChEBI" id="CHEBI:29950"/>
        <dbReference type="ChEBI" id="CHEBI:30879"/>
        <dbReference type="ChEBI" id="CHEBI:35924"/>
        <dbReference type="ChEBI" id="CHEBI:50058"/>
        <dbReference type="EC" id="1.11.1.29"/>
    </reaction>
</comment>
<comment type="subunit">
    <text evidence="2">Homodimer. Forms both dimers and octamers; a tightly-associated dimer and a ring-like octamer.</text>
</comment>
<comment type="miscellaneous">
    <text evidence="2">The active site is a conserved redox-active cysteine residue, the peroxidatic cysteine (C(P)), which makes the nucleophilic attack on the peroxide substrate. The peroxide oxidizes the C(P)-SH to cysteine sulfenic acid (C(P)-SOH), which then reacts with another cysteine residue, the resolving cysteine (C(R)), to form a disulfide bridge. The disulfide is subsequently reduced by an appropriate electron donor to complete the catalytic cycle. In this 1-Cys peroxiredoxin, no C(R) is present and C(P) instead forms a disulfide with a cysteine from another protein or with a small thiol molecule. C(P) can be reactivated through a mixed disulfide with the N-terminal cysteine of mycoredoxin-1 (Mrx1), resolved by its C-terminal cysteine, or by a mixed disulfide with mycothiol, resolved by a second molecule of mycothiol or by mycoredoxin-1.</text>
</comment>
<comment type="similarity">
    <text evidence="4">Belongs to the peroxiredoxin family. AhpE subfamily.</text>
</comment>
<protein>
    <recommendedName>
        <fullName>Alkyl hydroperoxide reductase E</fullName>
        <ecNumber evidence="2">1.11.1.29</ecNumber>
    </recommendedName>
    <alternativeName>
        <fullName evidence="4">Mycoredoxin-dependent peroxiredoxin</fullName>
    </alternativeName>
    <alternativeName>
        <fullName>Peroxiredoxin AhpE</fullName>
        <shortName>Prx</shortName>
    </alternativeName>
    <alternativeName>
        <fullName>Thioredoxin peroxidase</fullName>
        <shortName>TPx</shortName>
    </alternativeName>
</protein>
<feature type="chain" id="PRO_0000428022" description="Alkyl hydroperoxide reductase E">
    <location>
        <begin position="1"/>
        <end position="153"/>
    </location>
</feature>
<feature type="domain" description="Thioredoxin" evidence="3">
    <location>
        <begin position="2"/>
        <end position="153"/>
    </location>
</feature>
<feature type="active site" evidence="1">
    <location>
        <position position="45"/>
    </location>
</feature>
<name>AHPE_MYCTO</name>
<sequence length="153" mass="16819">MLNVGATAPDFTLRDQNQQLVTLRGYRGAKNVLLVFFPLAFTGICQGELDQLRDHLPEFENDDSAALAISVGPPPTHKIWATQSGFTFPLLSDFWPHGAVSQAYGVFNEQAGIANRGTFVVDRSGIIRFAEMKQPGEVRDQRLWTDALAALTA</sequence>
<dbReference type="EC" id="1.11.1.29" evidence="2"/>
<dbReference type="EMBL" id="AE000516">
    <property type="protein sequence ID" value="AAK46582.1"/>
    <property type="molecule type" value="Genomic_DNA"/>
</dbReference>
<dbReference type="PIR" id="B70778">
    <property type="entry name" value="B70778"/>
</dbReference>
<dbReference type="RefSeq" id="WP_003411527.1">
    <property type="nucleotide sequence ID" value="NZ_KK341227.1"/>
</dbReference>
<dbReference type="SMR" id="P9WIE2"/>
<dbReference type="GeneID" id="45426218"/>
<dbReference type="KEGG" id="mtc:MT2298"/>
<dbReference type="PATRIC" id="fig|83331.31.peg.2475"/>
<dbReference type="HOGENOM" id="CLU_042529_14_2_11"/>
<dbReference type="Proteomes" id="UP000001020">
    <property type="component" value="Chromosome"/>
</dbReference>
<dbReference type="GO" id="GO:0004601">
    <property type="term" value="F:peroxidase activity"/>
    <property type="evidence" value="ECO:0007669"/>
    <property type="project" value="UniProtKB-KW"/>
</dbReference>
<dbReference type="CDD" id="cd03018">
    <property type="entry name" value="PRX_AhpE_like"/>
    <property type="match status" value="1"/>
</dbReference>
<dbReference type="FunFam" id="3.40.30.10:FF:000118">
    <property type="entry name" value="Peroxiredoxin AhpE"/>
    <property type="match status" value="1"/>
</dbReference>
<dbReference type="Gene3D" id="3.40.30.10">
    <property type="entry name" value="Glutaredoxin"/>
    <property type="match status" value="1"/>
</dbReference>
<dbReference type="InterPro" id="IPR000866">
    <property type="entry name" value="AhpC/TSA"/>
</dbReference>
<dbReference type="InterPro" id="IPR024706">
    <property type="entry name" value="Peroxiredoxin_AhpC-typ"/>
</dbReference>
<dbReference type="InterPro" id="IPR036249">
    <property type="entry name" value="Thioredoxin-like_sf"/>
</dbReference>
<dbReference type="InterPro" id="IPR013766">
    <property type="entry name" value="Thioredoxin_domain"/>
</dbReference>
<dbReference type="InterPro" id="IPR050455">
    <property type="entry name" value="Tpx_Peroxidase_subfamily"/>
</dbReference>
<dbReference type="PANTHER" id="PTHR43110">
    <property type="entry name" value="THIOL PEROXIDASE"/>
    <property type="match status" value="1"/>
</dbReference>
<dbReference type="PANTHER" id="PTHR43110:SF1">
    <property type="entry name" value="THIOL PEROXIDASE"/>
    <property type="match status" value="1"/>
</dbReference>
<dbReference type="Pfam" id="PF00578">
    <property type="entry name" value="AhpC-TSA"/>
    <property type="match status" value="1"/>
</dbReference>
<dbReference type="PIRSF" id="PIRSF000239">
    <property type="entry name" value="AHPC"/>
    <property type="match status" value="1"/>
</dbReference>
<dbReference type="SUPFAM" id="SSF52833">
    <property type="entry name" value="Thioredoxin-like"/>
    <property type="match status" value="1"/>
</dbReference>
<dbReference type="PROSITE" id="PS51352">
    <property type="entry name" value="THIOREDOXIN_2"/>
    <property type="match status" value="1"/>
</dbReference>
<organism>
    <name type="scientific">Mycobacterium tuberculosis (strain CDC 1551 / Oshkosh)</name>
    <dbReference type="NCBI Taxonomy" id="83331"/>
    <lineage>
        <taxon>Bacteria</taxon>
        <taxon>Bacillati</taxon>
        <taxon>Actinomycetota</taxon>
        <taxon>Actinomycetes</taxon>
        <taxon>Mycobacteriales</taxon>
        <taxon>Mycobacteriaceae</taxon>
        <taxon>Mycobacterium</taxon>
        <taxon>Mycobacterium tuberculosis complex</taxon>
    </lineage>
</organism>
<gene>
    <name type="primary">ahpE</name>
    <name type="ordered locus">MT2298</name>
</gene>